<dbReference type="EMBL" id="CP000931">
    <property type="protein sequence ID" value="ABZ75778.1"/>
    <property type="molecule type" value="Genomic_DNA"/>
</dbReference>
<dbReference type="RefSeq" id="WP_012276320.1">
    <property type="nucleotide sequence ID" value="NC_010334.1"/>
</dbReference>
<dbReference type="SMR" id="B0TJZ1"/>
<dbReference type="STRING" id="458817.Shal_1209"/>
<dbReference type="KEGG" id="shl:Shal_1209"/>
<dbReference type="eggNOG" id="COG0781">
    <property type="taxonomic scope" value="Bacteria"/>
</dbReference>
<dbReference type="HOGENOM" id="CLU_087843_4_1_6"/>
<dbReference type="OrthoDB" id="9789556at2"/>
<dbReference type="Proteomes" id="UP000001317">
    <property type="component" value="Chromosome"/>
</dbReference>
<dbReference type="GO" id="GO:0005829">
    <property type="term" value="C:cytosol"/>
    <property type="evidence" value="ECO:0007669"/>
    <property type="project" value="TreeGrafter"/>
</dbReference>
<dbReference type="GO" id="GO:0003723">
    <property type="term" value="F:RNA binding"/>
    <property type="evidence" value="ECO:0007669"/>
    <property type="project" value="UniProtKB-UniRule"/>
</dbReference>
<dbReference type="GO" id="GO:0006353">
    <property type="term" value="P:DNA-templated transcription termination"/>
    <property type="evidence" value="ECO:0007669"/>
    <property type="project" value="UniProtKB-UniRule"/>
</dbReference>
<dbReference type="GO" id="GO:0031564">
    <property type="term" value="P:transcription antitermination"/>
    <property type="evidence" value="ECO:0007669"/>
    <property type="project" value="UniProtKB-KW"/>
</dbReference>
<dbReference type="CDD" id="cd00619">
    <property type="entry name" value="Terminator_NusB"/>
    <property type="match status" value="1"/>
</dbReference>
<dbReference type="FunFam" id="1.10.940.10:FF:000001">
    <property type="entry name" value="Transcription antitermination factor NusB"/>
    <property type="match status" value="1"/>
</dbReference>
<dbReference type="Gene3D" id="1.10.940.10">
    <property type="entry name" value="NusB-like"/>
    <property type="match status" value="1"/>
</dbReference>
<dbReference type="HAMAP" id="MF_00073">
    <property type="entry name" value="NusB"/>
    <property type="match status" value="1"/>
</dbReference>
<dbReference type="InterPro" id="IPR035926">
    <property type="entry name" value="NusB-like_sf"/>
</dbReference>
<dbReference type="InterPro" id="IPR011605">
    <property type="entry name" value="NusB_fam"/>
</dbReference>
<dbReference type="InterPro" id="IPR006027">
    <property type="entry name" value="NusB_RsmB_TIM44"/>
</dbReference>
<dbReference type="NCBIfam" id="TIGR01951">
    <property type="entry name" value="nusB"/>
    <property type="match status" value="1"/>
</dbReference>
<dbReference type="PANTHER" id="PTHR11078:SF3">
    <property type="entry name" value="ANTITERMINATION NUSB DOMAIN-CONTAINING PROTEIN"/>
    <property type="match status" value="1"/>
</dbReference>
<dbReference type="PANTHER" id="PTHR11078">
    <property type="entry name" value="N UTILIZATION SUBSTANCE PROTEIN B-RELATED"/>
    <property type="match status" value="1"/>
</dbReference>
<dbReference type="Pfam" id="PF01029">
    <property type="entry name" value="NusB"/>
    <property type="match status" value="1"/>
</dbReference>
<dbReference type="SUPFAM" id="SSF48013">
    <property type="entry name" value="NusB-like"/>
    <property type="match status" value="1"/>
</dbReference>
<comment type="function">
    <text evidence="1">Involved in transcription antitermination. Required for transcription of ribosomal RNA (rRNA) genes. Binds specifically to the boxA antiterminator sequence of the ribosomal RNA (rrn) operons.</text>
</comment>
<comment type="similarity">
    <text evidence="1">Belongs to the NusB family.</text>
</comment>
<reference key="1">
    <citation type="submission" date="2008-01" db="EMBL/GenBank/DDBJ databases">
        <title>Complete sequence of Shewanella halifaxensis HAW-EB4.</title>
        <authorList>
            <consortium name="US DOE Joint Genome Institute"/>
            <person name="Copeland A."/>
            <person name="Lucas S."/>
            <person name="Lapidus A."/>
            <person name="Glavina del Rio T."/>
            <person name="Dalin E."/>
            <person name="Tice H."/>
            <person name="Bruce D."/>
            <person name="Goodwin L."/>
            <person name="Pitluck S."/>
            <person name="Sims D."/>
            <person name="Brettin T."/>
            <person name="Detter J.C."/>
            <person name="Han C."/>
            <person name="Kuske C.R."/>
            <person name="Schmutz J."/>
            <person name="Larimer F."/>
            <person name="Land M."/>
            <person name="Hauser L."/>
            <person name="Kyrpides N."/>
            <person name="Kim E."/>
            <person name="Zhao J.-S."/>
            <person name="Richardson P."/>
        </authorList>
    </citation>
    <scope>NUCLEOTIDE SEQUENCE [LARGE SCALE GENOMIC DNA]</scope>
    <source>
        <strain>HAW-EB4</strain>
    </source>
</reference>
<evidence type="ECO:0000255" key="1">
    <source>
        <dbReference type="HAMAP-Rule" id="MF_00073"/>
    </source>
</evidence>
<keyword id="KW-0694">RNA-binding</keyword>
<keyword id="KW-0804">Transcription</keyword>
<keyword id="KW-0889">Transcription antitermination</keyword>
<keyword id="KW-0805">Transcription regulation</keyword>
<protein>
    <recommendedName>
        <fullName evidence="1">Transcription antitermination protein NusB</fullName>
    </recommendedName>
    <alternativeName>
        <fullName evidence="1">Antitermination factor NusB</fullName>
    </alternativeName>
</protein>
<sequence>MKPSERRKARRLAVQAIYSWQLSGNNIADVEHEFLTEQDVAGVDIAYFRELLGGVATKKSQLDELITPFLTRPLDEVDPVEKAIVRIATYELTFRKDVPYKVAINEAIELAKAFGAEDGHKFVNGILDKLVARNR</sequence>
<proteinExistence type="inferred from homology"/>
<gene>
    <name evidence="1" type="primary">nusB</name>
    <name type="ordered locus">Shal_1209</name>
</gene>
<organism>
    <name type="scientific">Shewanella halifaxensis (strain HAW-EB4)</name>
    <dbReference type="NCBI Taxonomy" id="458817"/>
    <lineage>
        <taxon>Bacteria</taxon>
        <taxon>Pseudomonadati</taxon>
        <taxon>Pseudomonadota</taxon>
        <taxon>Gammaproteobacteria</taxon>
        <taxon>Alteromonadales</taxon>
        <taxon>Shewanellaceae</taxon>
        <taxon>Shewanella</taxon>
    </lineage>
</organism>
<feature type="chain" id="PRO_1000075204" description="Transcription antitermination protein NusB">
    <location>
        <begin position="1"/>
        <end position="135"/>
    </location>
</feature>
<name>NUSB_SHEHH</name>
<accession>B0TJZ1</accession>